<keyword id="KW-0067">ATP-binding</keyword>
<keyword id="KW-0315">Glutamine amidotransferase</keyword>
<keyword id="KW-0436">Ligase</keyword>
<keyword id="KW-0460">Magnesium</keyword>
<keyword id="KW-0479">Metal-binding</keyword>
<keyword id="KW-0547">Nucleotide-binding</keyword>
<keyword id="KW-0665">Pyrimidine biosynthesis</keyword>
<gene>
    <name evidence="1" type="primary">pyrG</name>
    <name type="ordered locus">Bcenmc03_2127</name>
</gene>
<organism>
    <name type="scientific">Burkholderia orbicola (strain MC0-3)</name>
    <dbReference type="NCBI Taxonomy" id="406425"/>
    <lineage>
        <taxon>Bacteria</taxon>
        <taxon>Pseudomonadati</taxon>
        <taxon>Pseudomonadota</taxon>
        <taxon>Betaproteobacteria</taxon>
        <taxon>Burkholderiales</taxon>
        <taxon>Burkholderiaceae</taxon>
        <taxon>Burkholderia</taxon>
        <taxon>Burkholderia cepacia complex</taxon>
        <taxon>Burkholderia orbicola</taxon>
    </lineage>
</organism>
<accession>B1JUY8</accession>
<protein>
    <recommendedName>
        <fullName evidence="1">CTP synthase</fullName>
        <ecNumber evidence="1">6.3.4.2</ecNumber>
    </recommendedName>
    <alternativeName>
        <fullName evidence="1">Cytidine 5'-triphosphate synthase</fullName>
    </alternativeName>
    <alternativeName>
        <fullName evidence="1">Cytidine triphosphate synthetase</fullName>
        <shortName evidence="1">CTP synthetase</shortName>
        <shortName evidence="1">CTPS</shortName>
    </alternativeName>
    <alternativeName>
        <fullName evidence="1">UTP--ammonia ligase</fullName>
    </alternativeName>
</protein>
<evidence type="ECO:0000255" key="1">
    <source>
        <dbReference type="HAMAP-Rule" id="MF_01227"/>
    </source>
</evidence>
<name>PYRG_BURO0</name>
<reference key="1">
    <citation type="submission" date="2008-02" db="EMBL/GenBank/DDBJ databases">
        <title>Complete sequence of chromosome 1 of Burkholderia cenocepacia MC0-3.</title>
        <authorList>
            <person name="Copeland A."/>
            <person name="Lucas S."/>
            <person name="Lapidus A."/>
            <person name="Barry K."/>
            <person name="Bruce D."/>
            <person name="Goodwin L."/>
            <person name="Glavina del Rio T."/>
            <person name="Dalin E."/>
            <person name="Tice H."/>
            <person name="Pitluck S."/>
            <person name="Chain P."/>
            <person name="Malfatti S."/>
            <person name="Shin M."/>
            <person name="Vergez L."/>
            <person name="Schmutz J."/>
            <person name="Larimer F."/>
            <person name="Land M."/>
            <person name="Hauser L."/>
            <person name="Kyrpides N."/>
            <person name="Mikhailova N."/>
            <person name="Tiedje J."/>
            <person name="Richardson P."/>
        </authorList>
    </citation>
    <scope>NUCLEOTIDE SEQUENCE [LARGE SCALE GENOMIC DNA]</scope>
    <source>
        <strain>MC0-3</strain>
    </source>
</reference>
<dbReference type="EC" id="6.3.4.2" evidence="1"/>
<dbReference type="EMBL" id="CP000958">
    <property type="protein sequence ID" value="ACA91288.1"/>
    <property type="molecule type" value="Genomic_DNA"/>
</dbReference>
<dbReference type="RefSeq" id="WP_006478404.1">
    <property type="nucleotide sequence ID" value="NC_010508.1"/>
</dbReference>
<dbReference type="SMR" id="B1JUY8"/>
<dbReference type="MEROPS" id="C26.964"/>
<dbReference type="GeneID" id="83048911"/>
<dbReference type="KEGG" id="bcm:Bcenmc03_2127"/>
<dbReference type="HOGENOM" id="CLU_011675_5_0_4"/>
<dbReference type="UniPathway" id="UPA00159">
    <property type="reaction ID" value="UER00277"/>
</dbReference>
<dbReference type="Proteomes" id="UP000002169">
    <property type="component" value="Chromosome 1"/>
</dbReference>
<dbReference type="GO" id="GO:0005829">
    <property type="term" value="C:cytosol"/>
    <property type="evidence" value="ECO:0007669"/>
    <property type="project" value="TreeGrafter"/>
</dbReference>
<dbReference type="GO" id="GO:0005524">
    <property type="term" value="F:ATP binding"/>
    <property type="evidence" value="ECO:0007669"/>
    <property type="project" value="UniProtKB-KW"/>
</dbReference>
<dbReference type="GO" id="GO:0003883">
    <property type="term" value="F:CTP synthase activity"/>
    <property type="evidence" value="ECO:0007669"/>
    <property type="project" value="UniProtKB-UniRule"/>
</dbReference>
<dbReference type="GO" id="GO:0004359">
    <property type="term" value="F:glutaminase activity"/>
    <property type="evidence" value="ECO:0007669"/>
    <property type="project" value="RHEA"/>
</dbReference>
<dbReference type="GO" id="GO:0042802">
    <property type="term" value="F:identical protein binding"/>
    <property type="evidence" value="ECO:0007669"/>
    <property type="project" value="TreeGrafter"/>
</dbReference>
<dbReference type="GO" id="GO:0046872">
    <property type="term" value="F:metal ion binding"/>
    <property type="evidence" value="ECO:0007669"/>
    <property type="project" value="UniProtKB-KW"/>
</dbReference>
<dbReference type="GO" id="GO:0044210">
    <property type="term" value="P:'de novo' CTP biosynthetic process"/>
    <property type="evidence" value="ECO:0007669"/>
    <property type="project" value="UniProtKB-UniRule"/>
</dbReference>
<dbReference type="GO" id="GO:0019856">
    <property type="term" value="P:pyrimidine nucleobase biosynthetic process"/>
    <property type="evidence" value="ECO:0007669"/>
    <property type="project" value="TreeGrafter"/>
</dbReference>
<dbReference type="CDD" id="cd03113">
    <property type="entry name" value="CTPS_N"/>
    <property type="match status" value="1"/>
</dbReference>
<dbReference type="CDD" id="cd01746">
    <property type="entry name" value="GATase1_CTP_Synthase"/>
    <property type="match status" value="1"/>
</dbReference>
<dbReference type="FunFam" id="3.40.50.300:FF:000009">
    <property type="entry name" value="CTP synthase"/>
    <property type="match status" value="1"/>
</dbReference>
<dbReference type="FunFam" id="3.40.50.880:FF:000002">
    <property type="entry name" value="CTP synthase"/>
    <property type="match status" value="1"/>
</dbReference>
<dbReference type="Gene3D" id="3.40.50.880">
    <property type="match status" value="1"/>
</dbReference>
<dbReference type="Gene3D" id="3.40.50.300">
    <property type="entry name" value="P-loop containing nucleotide triphosphate hydrolases"/>
    <property type="match status" value="1"/>
</dbReference>
<dbReference type="HAMAP" id="MF_01227">
    <property type="entry name" value="PyrG"/>
    <property type="match status" value="1"/>
</dbReference>
<dbReference type="InterPro" id="IPR029062">
    <property type="entry name" value="Class_I_gatase-like"/>
</dbReference>
<dbReference type="InterPro" id="IPR004468">
    <property type="entry name" value="CTP_synthase"/>
</dbReference>
<dbReference type="InterPro" id="IPR017456">
    <property type="entry name" value="CTP_synthase_N"/>
</dbReference>
<dbReference type="InterPro" id="IPR017926">
    <property type="entry name" value="GATASE"/>
</dbReference>
<dbReference type="InterPro" id="IPR033828">
    <property type="entry name" value="GATase1_CTP_Synthase"/>
</dbReference>
<dbReference type="InterPro" id="IPR027417">
    <property type="entry name" value="P-loop_NTPase"/>
</dbReference>
<dbReference type="NCBIfam" id="NF003792">
    <property type="entry name" value="PRK05380.1"/>
    <property type="match status" value="1"/>
</dbReference>
<dbReference type="NCBIfam" id="TIGR00337">
    <property type="entry name" value="PyrG"/>
    <property type="match status" value="1"/>
</dbReference>
<dbReference type="PANTHER" id="PTHR11550">
    <property type="entry name" value="CTP SYNTHASE"/>
    <property type="match status" value="1"/>
</dbReference>
<dbReference type="PANTHER" id="PTHR11550:SF0">
    <property type="entry name" value="CTP SYNTHASE-RELATED"/>
    <property type="match status" value="1"/>
</dbReference>
<dbReference type="Pfam" id="PF06418">
    <property type="entry name" value="CTP_synth_N"/>
    <property type="match status" value="1"/>
</dbReference>
<dbReference type="Pfam" id="PF00117">
    <property type="entry name" value="GATase"/>
    <property type="match status" value="1"/>
</dbReference>
<dbReference type="SUPFAM" id="SSF52317">
    <property type="entry name" value="Class I glutamine amidotransferase-like"/>
    <property type="match status" value="1"/>
</dbReference>
<dbReference type="SUPFAM" id="SSF52540">
    <property type="entry name" value="P-loop containing nucleoside triphosphate hydrolases"/>
    <property type="match status" value="1"/>
</dbReference>
<dbReference type="PROSITE" id="PS51273">
    <property type="entry name" value="GATASE_TYPE_1"/>
    <property type="match status" value="1"/>
</dbReference>
<comment type="function">
    <text evidence="1">Catalyzes the ATP-dependent amination of UTP to CTP with either L-glutamine or ammonia as the source of nitrogen. Regulates intracellular CTP levels through interactions with the four ribonucleotide triphosphates.</text>
</comment>
<comment type="catalytic activity">
    <reaction evidence="1">
        <text>UTP + L-glutamine + ATP + H2O = CTP + L-glutamate + ADP + phosphate + 2 H(+)</text>
        <dbReference type="Rhea" id="RHEA:26426"/>
        <dbReference type="ChEBI" id="CHEBI:15377"/>
        <dbReference type="ChEBI" id="CHEBI:15378"/>
        <dbReference type="ChEBI" id="CHEBI:29985"/>
        <dbReference type="ChEBI" id="CHEBI:30616"/>
        <dbReference type="ChEBI" id="CHEBI:37563"/>
        <dbReference type="ChEBI" id="CHEBI:43474"/>
        <dbReference type="ChEBI" id="CHEBI:46398"/>
        <dbReference type="ChEBI" id="CHEBI:58359"/>
        <dbReference type="ChEBI" id="CHEBI:456216"/>
        <dbReference type="EC" id="6.3.4.2"/>
    </reaction>
</comment>
<comment type="catalytic activity">
    <reaction evidence="1">
        <text>L-glutamine + H2O = L-glutamate + NH4(+)</text>
        <dbReference type="Rhea" id="RHEA:15889"/>
        <dbReference type="ChEBI" id="CHEBI:15377"/>
        <dbReference type="ChEBI" id="CHEBI:28938"/>
        <dbReference type="ChEBI" id="CHEBI:29985"/>
        <dbReference type="ChEBI" id="CHEBI:58359"/>
    </reaction>
</comment>
<comment type="catalytic activity">
    <reaction evidence="1">
        <text>UTP + NH4(+) + ATP = CTP + ADP + phosphate + 2 H(+)</text>
        <dbReference type="Rhea" id="RHEA:16597"/>
        <dbReference type="ChEBI" id="CHEBI:15378"/>
        <dbReference type="ChEBI" id="CHEBI:28938"/>
        <dbReference type="ChEBI" id="CHEBI:30616"/>
        <dbReference type="ChEBI" id="CHEBI:37563"/>
        <dbReference type="ChEBI" id="CHEBI:43474"/>
        <dbReference type="ChEBI" id="CHEBI:46398"/>
        <dbReference type="ChEBI" id="CHEBI:456216"/>
    </reaction>
</comment>
<comment type="activity regulation">
    <text evidence="1">Allosterically activated by GTP, when glutamine is the substrate; GTP has no effect on the reaction when ammonia is the substrate. The allosteric effector GTP functions by stabilizing the protein conformation that binds the tetrahedral intermediate(s) formed during glutamine hydrolysis. Inhibited by the product CTP, via allosteric rather than competitive inhibition.</text>
</comment>
<comment type="pathway">
    <text evidence="1">Pyrimidine metabolism; CTP biosynthesis via de novo pathway; CTP from UDP: step 2/2.</text>
</comment>
<comment type="subunit">
    <text evidence="1">Homotetramer.</text>
</comment>
<comment type="miscellaneous">
    <text evidence="1">CTPSs have evolved a hybrid strategy for distinguishing between UTP and CTP. The overlapping regions of the product feedback inhibitory and substrate sites recognize a common feature in both compounds, the triphosphate moiety. To differentiate isosteric substrate and product pyrimidine rings, an additional pocket far from the expected kinase/ligase catalytic site, specifically recognizes the cytosine and ribose portions of the product inhibitor.</text>
</comment>
<comment type="similarity">
    <text evidence="1">Belongs to the CTP synthase family.</text>
</comment>
<sequence>MTKYVFVTGGVVSSLGKGIAAASLAAILESRGLKVTLLKLDPYINVDPGTMSPFQHGEVFVTEDGAETDLDLGHYERFISTKMRKANNFTTGQIYESVIRKERRGDYLGKTVQVIPHITNEIQAFIERGAASATCGEPDVAIVEIGGTVGDIESLPFLEAARQMSLRLGRNSACFVHLTLVPYVATAGELKTKPTQHSVQKLREIGILPHVLLCRADRRIPDDESKKISMFSNVPEDAVISVWDADSIYKIPQMLHDQGLDRIICEELKLSPKDADLSMWSALVEKLENPKQEVTIGMVGKYVDLTESYKSLIEALRHASIHTSTKVNIEYIDSEELETNGVDSLKHLDAVLVPGGFGRRGTEGKIAAVRYARESKVPYLGICLGMQLAVIEFARDVVGLKQANSTEFDPDTPERVVALITEWYDREGKVETRTEESDLGGTMRLGSQRCPIKPGTMAEEIYGKDVNERHRHRYEVNNRFVPQLEAGGLIISARTPSEDLPEMMELPRSMHPWFVGVQFHPEFTSTPRDGHPLFKSFVEAALANKQARGVQA</sequence>
<feature type="chain" id="PRO_1000139397" description="CTP synthase">
    <location>
        <begin position="1"/>
        <end position="552"/>
    </location>
</feature>
<feature type="domain" description="Glutamine amidotransferase type-1" evidence="1">
    <location>
        <begin position="295"/>
        <end position="547"/>
    </location>
</feature>
<feature type="region of interest" description="Amidoligase domain" evidence="1">
    <location>
        <begin position="1"/>
        <end position="270"/>
    </location>
</feature>
<feature type="active site" description="Nucleophile; for glutamine hydrolysis" evidence="1">
    <location>
        <position position="383"/>
    </location>
</feature>
<feature type="active site" evidence="1">
    <location>
        <position position="520"/>
    </location>
</feature>
<feature type="active site" evidence="1">
    <location>
        <position position="522"/>
    </location>
</feature>
<feature type="binding site" evidence="1">
    <location>
        <position position="13"/>
    </location>
    <ligand>
        <name>CTP</name>
        <dbReference type="ChEBI" id="CHEBI:37563"/>
        <note>allosteric inhibitor</note>
    </ligand>
</feature>
<feature type="binding site" evidence="1">
    <location>
        <position position="13"/>
    </location>
    <ligand>
        <name>UTP</name>
        <dbReference type="ChEBI" id="CHEBI:46398"/>
    </ligand>
</feature>
<feature type="binding site" evidence="1">
    <location>
        <begin position="14"/>
        <end position="19"/>
    </location>
    <ligand>
        <name>ATP</name>
        <dbReference type="ChEBI" id="CHEBI:30616"/>
    </ligand>
</feature>
<feature type="binding site" evidence="1">
    <location>
        <position position="71"/>
    </location>
    <ligand>
        <name>ATP</name>
        <dbReference type="ChEBI" id="CHEBI:30616"/>
    </ligand>
</feature>
<feature type="binding site" evidence="1">
    <location>
        <position position="71"/>
    </location>
    <ligand>
        <name>Mg(2+)</name>
        <dbReference type="ChEBI" id="CHEBI:18420"/>
    </ligand>
</feature>
<feature type="binding site" evidence="1">
    <location>
        <position position="144"/>
    </location>
    <ligand>
        <name>Mg(2+)</name>
        <dbReference type="ChEBI" id="CHEBI:18420"/>
    </ligand>
</feature>
<feature type="binding site" evidence="1">
    <location>
        <begin position="151"/>
        <end position="153"/>
    </location>
    <ligand>
        <name>CTP</name>
        <dbReference type="ChEBI" id="CHEBI:37563"/>
        <note>allosteric inhibitor</note>
    </ligand>
</feature>
<feature type="binding site" evidence="1">
    <location>
        <begin position="191"/>
        <end position="196"/>
    </location>
    <ligand>
        <name>CTP</name>
        <dbReference type="ChEBI" id="CHEBI:37563"/>
        <note>allosteric inhibitor</note>
    </ligand>
</feature>
<feature type="binding site" evidence="1">
    <location>
        <begin position="191"/>
        <end position="196"/>
    </location>
    <ligand>
        <name>UTP</name>
        <dbReference type="ChEBI" id="CHEBI:46398"/>
    </ligand>
</feature>
<feature type="binding site" evidence="1">
    <location>
        <position position="227"/>
    </location>
    <ligand>
        <name>CTP</name>
        <dbReference type="ChEBI" id="CHEBI:37563"/>
        <note>allosteric inhibitor</note>
    </ligand>
</feature>
<feature type="binding site" evidence="1">
    <location>
        <position position="227"/>
    </location>
    <ligand>
        <name>UTP</name>
        <dbReference type="ChEBI" id="CHEBI:46398"/>
    </ligand>
</feature>
<feature type="binding site" evidence="1">
    <location>
        <position position="356"/>
    </location>
    <ligand>
        <name>L-glutamine</name>
        <dbReference type="ChEBI" id="CHEBI:58359"/>
    </ligand>
</feature>
<feature type="binding site" evidence="1">
    <location>
        <begin position="384"/>
        <end position="387"/>
    </location>
    <ligand>
        <name>L-glutamine</name>
        <dbReference type="ChEBI" id="CHEBI:58359"/>
    </ligand>
</feature>
<feature type="binding site" evidence="1">
    <location>
        <position position="407"/>
    </location>
    <ligand>
        <name>L-glutamine</name>
        <dbReference type="ChEBI" id="CHEBI:58359"/>
    </ligand>
</feature>
<feature type="binding site" evidence="1">
    <location>
        <position position="473"/>
    </location>
    <ligand>
        <name>L-glutamine</name>
        <dbReference type="ChEBI" id="CHEBI:58359"/>
    </ligand>
</feature>
<proteinExistence type="inferred from homology"/>